<dbReference type="EC" id="6.2.1.15" evidence="3"/>
<dbReference type="EC" id="6.2.1.3" evidence="2"/>
<dbReference type="EC" id="6.2.1.2" evidence="3"/>
<dbReference type="EMBL" id="AK012088">
    <property type="protein sequence ID" value="BAB28022.1"/>
    <property type="molecule type" value="mRNA"/>
</dbReference>
<dbReference type="EMBL" id="AK161708">
    <property type="protein sequence ID" value="BAE36543.1"/>
    <property type="molecule type" value="mRNA"/>
</dbReference>
<dbReference type="EMBL" id="CH466548">
    <property type="protein sequence ID" value="EDL00440.1"/>
    <property type="molecule type" value="Genomic_DNA"/>
</dbReference>
<dbReference type="EMBL" id="CH466548">
    <property type="protein sequence ID" value="EDL00441.1"/>
    <property type="molecule type" value="Genomic_DNA"/>
</dbReference>
<dbReference type="EMBL" id="BC031529">
    <property type="protein sequence ID" value="AAH31529.1"/>
    <property type="molecule type" value="mRNA"/>
</dbReference>
<dbReference type="CCDS" id="CCDS15087.1"/>
<dbReference type="RefSeq" id="NP_001028778.2">
    <property type="nucleotide sequence ID" value="NM_001033606.3"/>
</dbReference>
<dbReference type="RefSeq" id="NP_001129694.1">
    <property type="nucleotide sequence ID" value="NM_001136222.1"/>
</dbReference>
<dbReference type="RefSeq" id="NP_001396006.1">
    <property type="nucleotide sequence ID" value="NM_001409077.1"/>
</dbReference>
<dbReference type="RefSeq" id="NP_001396007.1">
    <property type="nucleotide sequence ID" value="NM_001409078.1"/>
</dbReference>
<dbReference type="RefSeq" id="NP_083093.2">
    <property type="nucleotide sequence ID" value="NM_028817.4"/>
</dbReference>
<dbReference type="SMR" id="Q9CZW4"/>
<dbReference type="BioGRID" id="216576">
    <property type="interactions" value="8"/>
</dbReference>
<dbReference type="FunCoup" id="Q9CZW4">
    <property type="interactions" value="3132"/>
</dbReference>
<dbReference type="STRING" id="10090.ENSMUSP00000045291"/>
<dbReference type="GlyGen" id="Q9CZW4">
    <property type="glycosylation" value="2 sites, 1 N-linked glycan (1 site), 1 O-linked glycan (1 site)"/>
</dbReference>
<dbReference type="iPTMnet" id="Q9CZW4"/>
<dbReference type="PhosphoSitePlus" id="Q9CZW4"/>
<dbReference type="SwissPalm" id="Q9CZW4"/>
<dbReference type="CPTAC" id="non-CPTAC-3442"/>
<dbReference type="PaxDb" id="10090-ENSMUSP00000045291"/>
<dbReference type="PeptideAtlas" id="Q9CZW4"/>
<dbReference type="ProteomicsDB" id="285657"/>
<dbReference type="Pumba" id="Q9CZW4"/>
<dbReference type="Antibodypedia" id="1945">
    <property type="antibodies" value="203 antibodies from 29 providers"/>
</dbReference>
<dbReference type="DNASU" id="74205"/>
<dbReference type="Ensembl" id="ENSMUST00000035779.15">
    <property type="protein sequence ID" value="ENSMUSP00000045291.9"/>
    <property type="gene ID" value="ENSMUSG00000032883.16"/>
</dbReference>
<dbReference type="Ensembl" id="ENSMUST00000142704.8">
    <property type="protein sequence ID" value="ENSMUSP00000121695.2"/>
    <property type="gene ID" value="ENSMUSG00000032883.16"/>
</dbReference>
<dbReference type="GeneID" id="74205"/>
<dbReference type="KEGG" id="mmu:74205"/>
<dbReference type="UCSC" id="uc007bqo.2">
    <property type="organism name" value="mouse"/>
</dbReference>
<dbReference type="AGR" id="MGI:1921455"/>
<dbReference type="CTD" id="2181"/>
<dbReference type="MGI" id="MGI:1921455">
    <property type="gene designation" value="Acsl3"/>
</dbReference>
<dbReference type="VEuPathDB" id="HostDB:ENSMUSG00000032883"/>
<dbReference type="eggNOG" id="KOG1180">
    <property type="taxonomic scope" value="Eukaryota"/>
</dbReference>
<dbReference type="GeneTree" id="ENSGT00940000155954"/>
<dbReference type="InParanoid" id="Q9CZW4"/>
<dbReference type="OMA" id="KIFQWAA"/>
<dbReference type="OrthoDB" id="1700726at2759"/>
<dbReference type="PhylomeDB" id="Q9CZW4"/>
<dbReference type="TreeFam" id="TF314012"/>
<dbReference type="BRENDA" id="6.2.1.3">
    <property type="organism ID" value="3474"/>
</dbReference>
<dbReference type="Reactome" id="R-MMU-434313">
    <property type="pathway name" value="Intracellular metabolism of fatty acids regulates insulin secretion"/>
</dbReference>
<dbReference type="Reactome" id="R-MMU-75876">
    <property type="pathway name" value="Synthesis of very long-chain fatty acyl-CoAs"/>
</dbReference>
<dbReference type="BioGRID-ORCS" id="74205">
    <property type="hits" value="7 hits in 84 CRISPR screens"/>
</dbReference>
<dbReference type="CD-CODE" id="CE726F99">
    <property type="entry name" value="Postsynaptic density"/>
</dbReference>
<dbReference type="ChiTaRS" id="Acsl3">
    <property type="organism name" value="mouse"/>
</dbReference>
<dbReference type="PRO" id="PR:Q9CZW4"/>
<dbReference type="Proteomes" id="UP000000589">
    <property type="component" value="Chromosome 1"/>
</dbReference>
<dbReference type="RNAct" id="Q9CZW4">
    <property type="molecule type" value="protein"/>
</dbReference>
<dbReference type="Bgee" id="ENSMUSG00000032883">
    <property type="expression patterns" value="Expressed in otolith organ and 241 other cell types or tissues"/>
</dbReference>
<dbReference type="ExpressionAtlas" id="Q9CZW4">
    <property type="expression patterns" value="baseline and differential"/>
</dbReference>
<dbReference type="GO" id="GO:0005789">
    <property type="term" value="C:endoplasmic reticulum membrane"/>
    <property type="evidence" value="ECO:0007669"/>
    <property type="project" value="UniProtKB-SubCell"/>
</dbReference>
<dbReference type="GO" id="GO:0005794">
    <property type="term" value="C:Golgi apparatus"/>
    <property type="evidence" value="ECO:0007669"/>
    <property type="project" value="Ensembl"/>
</dbReference>
<dbReference type="GO" id="GO:0005811">
    <property type="term" value="C:lipid droplet"/>
    <property type="evidence" value="ECO:0007669"/>
    <property type="project" value="Ensembl"/>
</dbReference>
<dbReference type="GO" id="GO:0005741">
    <property type="term" value="C:mitochondrial outer membrane"/>
    <property type="evidence" value="ECO:0007669"/>
    <property type="project" value="UniProtKB-SubCell"/>
</dbReference>
<dbReference type="GO" id="GO:0048471">
    <property type="term" value="C:perinuclear region of cytoplasm"/>
    <property type="evidence" value="ECO:0007669"/>
    <property type="project" value="Ensembl"/>
</dbReference>
<dbReference type="GO" id="GO:0005778">
    <property type="term" value="C:peroxisomal membrane"/>
    <property type="evidence" value="ECO:0007669"/>
    <property type="project" value="UniProtKB-SubCell"/>
</dbReference>
<dbReference type="GO" id="GO:0047676">
    <property type="term" value="F:arachidonate-CoA ligase activity"/>
    <property type="evidence" value="ECO:0000250"/>
    <property type="project" value="UniProtKB"/>
</dbReference>
<dbReference type="GO" id="GO:0005524">
    <property type="term" value="F:ATP binding"/>
    <property type="evidence" value="ECO:0007669"/>
    <property type="project" value="UniProtKB-KW"/>
</dbReference>
<dbReference type="GO" id="GO:0004467">
    <property type="term" value="F:long-chain fatty acid-CoA ligase activity"/>
    <property type="evidence" value="ECO:0000250"/>
    <property type="project" value="UniProtKB"/>
</dbReference>
<dbReference type="GO" id="GO:0031956">
    <property type="term" value="F:medium-chain fatty acid-CoA ligase activity"/>
    <property type="evidence" value="ECO:0007669"/>
    <property type="project" value="RHEA"/>
</dbReference>
<dbReference type="GO" id="GO:0019904">
    <property type="term" value="F:protein domain specific binding"/>
    <property type="evidence" value="ECO:0007669"/>
    <property type="project" value="Ensembl"/>
</dbReference>
<dbReference type="GO" id="GO:0019901">
    <property type="term" value="F:protein kinase binding"/>
    <property type="evidence" value="ECO:0007669"/>
    <property type="project" value="Ensembl"/>
</dbReference>
<dbReference type="GO" id="GO:0044539">
    <property type="term" value="P:long-chain fatty acid import into cell"/>
    <property type="evidence" value="ECO:0007669"/>
    <property type="project" value="Ensembl"/>
</dbReference>
<dbReference type="GO" id="GO:0001676">
    <property type="term" value="P:long-chain fatty acid metabolic process"/>
    <property type="evidence" value="ECO:0000250"/>
    <property type="project" value="UniProtKB"/>
</dbReference>
<dbReference type="GO" id="GO:0042998">
    <property type="term" value="P:positive regulation of Golgi to plasma membrane protein transport"/>
    <property type="evidence" value="ECO:0007669"/>
    <property type="project" value="Ensembl"/>
</dbReference>
<dbReference type="GO" id="GO:2001247">
    <property type="term" value="P:positive regulation of phosphatidylcholine biosynthetic process"/>
    <property type="evidence" value="ECO:0007669"/>
    <property type="project" value="Ensembl"/>
</dbReference>
<dbReference type="GO" id="GO:0051047">
    <property type="term" value="P:positive regulation of secretion"/>
    <property type="evidence" value="ECO:0007669"/>
    <property type="project" value="Ensembl"/>
</dbReference>
<dbReference type="GO" id="GO:0034379">
    <property type="term" value="P:very-low-density lipoprotein particle assembly"/>
    <property type="evidence" value="ECO:0007669"/>
    <property type="project" value="Ensembl"/>
</dbReference>
<dbReference type="CDD" id="cd17639">
    <property type="entry name" value="LC_FACS_euk1"/>
    <property type="match status" value="1"/>
</dbReference>
<dbReference type="Gene3D" id="3.40.50.12780">
    <property type="entry name" value="N-terminal domain of ligase-like"/>
    <property type="match status" value="1"/>
</dbReference>
<dbReference type="InterPro" id="IPR020845">
    <property type="entry name" value="AMP-binding_CS"/>
</dbReference>
<dbReference type="InterPro" id="IPR000873">
    <property type="entry name" value="AMP-dep_synth/lig_dom"/>
</dbReference>
<dbReference type="InterPro" id="IPR042099">
    <property type="entry name" value="ANL_N_sf"/>
</dbReference>
<dbReference type="PANTHER" id="PTHR43272:SF13">
    <property type="entry name" value="FATTY ACID COA LIGASE ACSL3"/>
    <property type="match status" value="1"/>
</dbReference>
<dbReference type="PANTHER" id="PTHR43272">
    <property type="entry name" value="LONG-CHAIN-FATTY-ACID--COA LIGASE"/>
    <property type="match status" value="1"/>
</dbReference>
<dbReference type="Pfam" id="PF00501">
    <property type="entry name" value="AMP-binding"/>
    <property type="match status" value="1"/>
</dbReference>
<dbReference type="SUPFAM" id="SSF56801">
    <property type="entry name" value="Acetyl-CoA synthetase-like"/>
    <property type="match status" value="1"/>
</dbReference>
<dbReference type="PROSITE" id="PS00455">
    <property type="entry name" value="AMP_BINDING"/>
    <property type="match status" value="1"/>
</dbReference>
<comment type="function">
    <text evidence="1 2 3">Acyl-CoA synthetases (ACSL) activates long-chain fatty acids for both synthesis of cellular lipids, and degradation via beta-oxidation (By similarity). ACSL3 is required for the incorporation of fatty acids into phosphatidylcholine, the major phospholipid located on the surface of VLDL (very low density lipoproteins) (By similarity). Has mainly an anabolic role in energy metabolism. Mediates hepatic lipogenesis. Preferentially uses myristate, laurate, arachidonate and eicosapentaenoate as substrates. Both isoforms exhibit the same level of activity (By similarity).</text>
</comment>
<comment type="catalytic activity">
    <reaction evidence="3">
        <text>a long-chain fatty acid + ATP + CoA = a long-chain fatty acyl-CoA + AMP + diphosphate</text>
        <dbReference type="Rhea" id="RHEA:15421"/>
        <dbReference type="ChEBI" id="CHEBI:30616"/>
        <dbReference type="ChEBI" id="CHEBI:33019"/>
        <dbReference type="ChEBI" id="CHEBI:57287"/>
        <dbReference type="ChEBI" id="CHEBI:57560"/>
        <dbReference type="ChEBI" id="CHEBI:83139"/>
        <dbReference type="ChEBI" id="CHEBI:456215"/>
        <dbReference type="EC" id="6.2.1.3"/>
    </reaction>
    <physiologicalReaction direction="left-to-right" evidence="3">
        <dbReference type="Rhea" id="RHEA:15422"/>
    </physiologicalReaction>
</comment>
<comment type="catalytic activity">
    <reaction evidence="2">
        <text>(E)-hexadec-2-enoate + ATP + CoA = (2E)-hexadecenoyl-CoA + AMP + diphosphate</text>
        <dbReference type="Rhea" id="RHEA:36139"/>
        <dbReference type="ChEBI" id="CHEBI:30616"/>
        <dbReference type="ChEBI" id="CHEBI:33019"/>
        <dbReference type="ChEBI" id="CHEBI:57287"/>
        <dbReference type="ChEBI" id="CHEBI:61526"/>
        <dbReference type="ChEBI" id="CHEBI:72745"/>
        <dbReference type="ChEBI" id="CHEBI:456215"/>
    </reaction>
    <physiologicalReaction direction="left-to-right" evidence="2">
        <dbReference type="Rhea" id="RHEA:36140"/>
    </physiologicalReaction>
</comment>
<comment type="catalytic activity">
    <reaction evidence="3">
        <text>(5Z,8Z,11Z,14Z)-eicosatetraenoate + ATP + CoA = (5Z,8Z,11Z,14Z)-eicosatetraenoyl-CoA + AMP + diphosphate</text>
        <dbReference type="Rhea" id="RHEA:19713"/>
        <dbReference type="ChEBI" id="CHEBI:30616"/>
        <dbReference type="ChEBI" id="CHEBI:32395"/>
        <dbReference type="ChEBI" id="CHEBI:33019"/>
        <dbReference type="ChEBI" id="CHEBI:57287"/>
        <dbReference type="ChEBI" id="CHEBI:57368"/>
        <dbReference type="ChEBI" id="CHEBI:456215"/>
        <dbReference type="EC" id="6.2.1.15"/>
    </reaction>
    <physiologicalReaction direction="left-to-right" evidence="3">
        <dbReference type="Rhea" id="RHEA:19714"/>
    </physiologicalReaction>
</comment>
<comment type="catalytic activity">
    <reaction evidence="3">
        <text>15-hydroxy-(5Z,8Z,11Z,13E)-eicosatetraenoate + ATP + CoA = 15-hydroxy-(5Z,8Z,11Z,13E)-eicosatetraenoyl-CoA + AMP + diphosphate</text>
        <dbReference type="Rhea" id="RHEA:52116"/>
        <dbReference type="ChEBI" id="CHEBI:30616"/>
        <dbReference type="ChEBI" id="CHEBI:33019"/>
        <dbReference type="ChEBI" id="CHEBI:57287"/>
        <dbReference type="ChEBI" id="CHEBI:78832"/>
        <dbReference type="ChEBI" id="CHEBI:136409"/>
        <dbReference type="ChEBI" id="CHEBI:456215"/>
    </reaction>
    <physiologicalReaction direction="left-to-right" evidence="3">
        <dbReference type="Rhea" id="RHEA:52117"/>
    </physiologicalReaction>
</comment>
<comment type="catalytic activity">
    <reaction evidence="3">
        <text>12-hydroxy-(5Z,8Z,10E,14Z)-eicosatetraenoate + ATP + CoA = 12-hydroxy-(5Z,8Z,10E,14Z)-eicosatetraenoyl-CoA + AMP + diphosphate</text>
        <dbReference type="Rhea" id="RHEA:52112"/>
        <dbReference type="ChEBI" id="CHEBI:30616"/>
        <dbReference type="ChEBI" id="CHEBI:33019"/>
        <dbReference type="ChEBI" id="CHEBI:57287"/>
        <dbReference type="ChEBI" id="CHEBI:90718"/>
        <dbReference type="ChEBI" id="CHEBI:136408"/>
        <dbReference type="ChEBI" id="CHEBI:456215"/>
    </reaction>
    <physiologicalReaction direction="left-to-right" evidence="3">
        <dbReference type="Rhea" id="RHEA:52113"/>
    </physiologicalReaction>
</comment>
<comment type="catalytic activity">
    <reaction evidence="3">
        <text>5-hydroxy-(6E,8Z,11Z,14Z)-eicosatetraenoate + ATP + CoA = 5-hydroxy-(6E,8Z,11Z,14Z)-eicosatetraenoyl-CoA + AMP + diphosphate</text>
        <dbReference type="Rhea" id="RHEA:52108"/>
        <dbReference type="ChEBI" id="CHEBI:30616"/>
        <dbReference type="ChEBI" id="CHEBI:33019"/>
        <dbReference type="ChEBI" id="CHEBI:57287"/>
        <dbReference type="ChEBI" id="CHEBI:65341"/>
        <dbReference type="ChEBI" id="CHEBI:136407"/>
        <dbReference type="ChEBI" id="CHEBI:456215"/>
    </reaction>
    <physiologicalReaction direction="left-to-right" evidence="3">
        <dbReference type="Rhea" id="RHEA:52109"/>
    </physiologicalReaction>
</comment>
<comment type="catalytic activity">
    <reaction evidence="3">
        <text>14,15-epoxy-(5Z,8Z,11Z)-eicosatrienoate + ATP + CoA = 14,15-epoxy-(5Z,8Z,11Z)-eicosatrienoyl-CoA + AMP + diphosphate</text>
        <dbReference type="Rhea" id="RHEA:52016"/>
        <dbReference type="ChEBI" id="CHEBI:30616"/>
        <dbReference type="ChEBI" id="CHEBI:33019"/>
        <dbReference type="ChEBI" id="CHEBI:57287"/>
        <dbReference type="ChEBI" id="CHEBI:84024"/>
        <dbReference type="ChEBI" id="CHEBI:136117"/>
        <dbReference type="ChEBI" id="CHEBI:456215"/>
    </reaction>
    <physiologicalReaction direction="left-to-right" evidence="3">
        <dbReference type="Rhea" id="RHEA:52017"/>
    </physiologicalReaction>
</comment>
<comment type="catalytic activity">
    <reaction evidence="3">
        <text>11,12-epoxy-(5Z,8Z,14Z)-eicosatrienoate + ATP + CoA = 11,12-epoxy-(5Z,8Z,14Z)-eicosatrienoyl-CoA + AMP + diphosphate</text>
        <dbReference type="Rhea" id="RHEA:52012"/>
        <dbReference type="ChEBI" id="CHEBI:30616"/>
        <dbReference type="ChEBI" id="CHEBI:33019"/>
        <dbReference type="ChEBI" id="CHEBI:57287"/>
        <dbReference type="ChEBI" id="CHEBI:76625"/>
        <dbReference type="ChEBI" id="CHEBI:136115"/>
        <dbReference type="ChEBI" id="CHEBI:456215"/>
    </reaction>
    <physiologicalReaction direction="left-to-right" evidence="3">
        <dbReference type="Rhea" id="RHEA:52013"/>
    </physiologicalReaction>
</comment>
<comment type="catalytic activity">
    <reaction evidence="3">
        <text>a medium-chain fatty acid + ATP + CoA = a medium-chain fatty acyl-CoA + AMP + diphosphate</text>
        <dbReference type="Rhea" id="RHEA:48340"/>
        <dbReference type="ChEBI" id="CHEBI:30616"/>
        <dbReference type="ChEBI" id="CHEBI:33019"/>
        <dbReference type="ChEBI" id="CHEBI:57287"/>
        <dbReference type="ChEBI" id="CHEBI:59558"/>
        <dbReference type="ChEBI" id="CHEBI:90546"/>
        <dbReference type="ChEBI" id="CHEBI:456215"/>
        <dbReference type="EC" id="6.2.1.2"/>
    </reaction>
    <physiologicalReaction direction="left-to-right" evidence="3">
        <dbReference type="Rhea" id="RHEA:48341"/>
    </physiologicalReaction>
</comment>
<comment type="catalytic activity">
    <reaction evidence="3">
        <text>hexadecanoate + ATP + CoA = hexadecanoyl-CoA + AMP + diphosphate</text>
        <dbReference type="Rhea" id="RHEA:30751"/>
        <dbReference type="ChEBI" id="CHEBI:7896"/>
        <dbReference type="ChEBI" id="CHEBI:30616"/>
        <dbReference type="ChEBI" id="CHEBI:33019"/>
        <dbReference type="ChEBI" id="CHEBI:57287"/>
        <dbReference type="ChEBI" id="CHEBI:57379"/>
        <dbReference type="ChEBI" id="CHEBI:456215"/>
    </reaction>
    <physiologicalReaction direction="left-to-right" evidence="3">
        <dbReference type="Rhea" id="RHEA:30752"/>
    </physiologicalReaction>
</comment>
<comment type="catalytic activity">
    <reaction evidence="3">
        <text>tetradecanoate + ATP + CoA = tetradecanoyl-CoA + AMP + diphosphate</text>
        <dbReference type="Rhea" id="RHEA:33619"/>
        <dbReference type="ChEBI" id="CHEBI:30616"/>
        <dbReference type="ChEBI" id="CHEBI:30807"/>
        <dbReference type="ChEBI" id="CHEBI:33019"/>
        <dbReference type="ChEBI" id="CHEBI:57287"/>
        <dbReference type="ChEBI" id="CHEBI:57385"/>
        <dbReference type="ChEBI" id="CHEBI:456215"/>
    </reaction>
    <physiologicalReaction direction="left-to-right" evidence="3">
        <dbReference type="Rhea" id="RHEA:33620"/>
    </physiologicalReaction>
</comment>
<comment type="catalytic activity">
    <reaction evidence="3">
        <text>dodecanoate + ATP + CoA = dodecanoyl-CoA + AMP + diphosphate</text>
        <dbReference type="Rhea" id="RHEA:33623"/>
        <dbReference type="ChEBI" id="CHEBI:18262"/>
        <dbReference type="ChEBI" id="CHEBI:30616"/>
        <dbReference type="ChEBI" id="CHEBI:33019"/>
        <dbReference type="ChEBI" id="CHEBI:57287"/>
        <dbReference type="ChEBI" id="CHEBI:57375"/>
        <dbReference type="ChEBI" id="CHEBI:456215"/>
    </reaction>
    <physiologicalReaction direction="left-to-right" evidence="3">
        <dbReference type="Rhea" id="RHEA:33624"/>
    </physiologicalReaction>
</comment>
<comment type="catalytic activity">
    <reaction evidence="3">
        <text>octadecanoate + ATP + CoA = octadecanoyl-CoA + AMP + diphosphate</text>
        <dbReference type="Rhea" id="RHEA:33615"/>
        <dbReference type="ChEBI" id="CHEBI:25629"/>
        <dbReference type="ChEBI" id="CHEBI:30616"/>
        <dbReference type="ChEBI" id="CHEBI:33019"/>
        <dbReference type="ChEBI" id="CHEBI:57287"/>
        <dbReference type="ChEBI" id="CHEBI:57394"/>
        <dbReference type="ChEBI" id="CHEBI:456215"/>
    </reaction>
    <physiologicalReaction direction="left-to-right" evidence="3">
        <dbReference type="Rhea" id="RHEA:33616"/>
    </physiologicalReaction>
</comment>
<comment type="catalytic activity">
    <reaction evidence="3">
        <text>eicosanoate + ATP + CoA = eicosanoyl-CoA + AMP + diphosphate</text>
        <dbReference type="Rhea" id="RHEA:46208"/>
        <dbReference type="ChEBI" id="CHEBI:30616"/>
        <dbReference type="ChEBI" id="CHEBI:32360"/>
        <dbReference type="ChEBI" id="CHEBI:33019"/>
        <dbReference type="ChEBI" id="CHEBI:57287"/>
        <dbReference type="ChEBI" id="CHEBI:57380"/>
        <dbReference type="ChEBI" id="CHEBI:456215"/>
    </reaction>
    <physiologicalReaction direction="left-to-right" evidence="3">
        <dbReference type="Rhea" id="RHEA:46209"/>
    </physiologicalReaction>
</comment>
<comment type="catalytic activity">
    <reaction evidence="3">
        <text>(9Z)-octadecenoate + ATP + CoA = (9Z)-octadecenoyl-CoA + AMP + diphosphate</text>
        <dbReference type="Rhea" id="RHEA:33607"/>
        <dbReference type="ChEBI" id="CHEBI:30616"/>
        <dbReference type="ChEBI" id="CHEBI:30823"/>
        <dbReference type="ChEBI" id="CHEBI:33019"/>
        <dbReference type="ChEBI" id="CHEBI:57287"/>
        <dbReference type="ChEBI" id="CHEBI:57387"/>
        <dbReference type="ChEBI" id="CHEBI:456215"/>
    </reaction>
    <physiologicalReaction direction="left-to-right" evidence="3">
        <dbReference type="Rhea" id="RHEA:33608"/>
    </physiologicalReaction>
</comment>
<comment type="catalytic activity">
    <reaction evidence="3">
        <text>(9Z)-hexadecenoate + ATP + CoA = (9Z)-hexadecenoyl-CoA + AMP + diphosphate</text>
        <dbReference type="Rhea" id="RHEA:33647"/>
        <dbReference type="ChEBI" id="CHEBI:30616"/>
        <dbReference type="ChEBI" id="CHEBI:32372"/>
        <dbReference type="ChEBI" id="CHEBI:33019"/>
        <dbReference type="ChEBI" id="CHEBI:57287"/>
        <dbReference type="ChEBI" id="CHEBI:61540"/>
        <dbReference type="ChEBI" id="CHEBI:456215"/>
    </reaction>
    <physiologicalReaction direction="left-to-right" evidence="3">
        <dbReference type="Rhea" id="RHEA:33648"/>
    </physiologicalReaction>
</comment>
<comment type="catalytic activity">
    <reaction evidence="3">
        <text>(9Z,12Z)-octadecadienoate + ATP + CoA = (9Z,12Z)-octadecadienoyl-CoA + AMP + diphosphate</text>
        <dbReference type="Rhea" id="RHEA:33651"/>
        <dbReference type="ChEBI" id="CHEBI:30245"/>
        <dbReference type="ChEBI" id="CHEBI:30616"/>
        <dbReference type="ChEBI" id="CHEBI:33019"/>
        <dbReference type="ChEBI" id="CHEBI:57287"/>
        <dbReference type="ChEBI" id="CHEBI:57383"/>
        <dbReference type="ChEBI" id="CHEBI:456215"/>
    </reaction>
</comment>
<comment type="catalytic activity">
    <reaction evidence="3">
        <text>(9Z,12Z,15Z)-octadecatrienoate + ATP + CoA = (9Z,12Z,15Z)-octadecatrienoyl-CoA + AMP + diphosphate</text>
        <dbReference type="Rhea" id="RHEA:44936"/>
        <dbReference type="ChEBI" id="CHEBI:30616"/>
        <dbReference type="ChEBI" id="CHEBI:32387"/>
        <dbReference type="ChEBI" id="CHEBI:33019"/>
        <dbReference type="ChEBI" id="CHEBI:57287"/>
        <dbReference type="ChEBI" id="CHEBI:74034"/>
        <dbReference type="ChEBI" id="CHEBI:456215"/>
    </reaction>
    <physiologicalReaction direction="left-to-right" evidence="3">
        <dbReference type="Rhea" id="RHEA:44937"/>
    </physiologicalReaction>
</comment>
<comment type="catalytic activity">
    <reaction evidence="3">
        <text>(4Z,7Z,10Z,13Z,16Z,19Z)-docosahexaenoate + ATP + CoA = (4Z,7Z,10Z,13Z,16Z,19Z)-docosahexaenoyl-CoA + AMP + diphosphate</text>
        <dbReference type="Rhea" id="RHEA:44932"/>
        <dbReference type="ChEBI" id="CHEBI:30616"/>
        <dbReference type="ChEBI" id="CHEBI:33019"/>
        <dbReference type="ChEBI" id="CHEBI:57287"/>
        <dbReference type="ChEBI" id="CHEBI:74298"/>
        <dbReference type="ChEBI" id="CHEBI:77016"/>
        <dbReference type="ChEBI" id="CHEBI:456215"/>
    </reaction>
    <physiologicalReaction direction="left-to-right" evidence="3">
        <dbReference type="Rhea" id="RHEA:44933"/>
    </physiologicalReaction>
</comment>
<comment type="catalytic activity">
    <reaction evidence="3">
        <text>(5Z,8Z,11Z,14Z,17Z)-eicosapentaenoate + ATP + CoA = (5Z,8Z,11Z,14Z,17Z)-eicosapentaenoyl-CoA + AMP + diphosphate</text>
        <dbReference type="Rhea" id="RHEA:67848"/>
        <dbReference type="ChEBI" id="CHEBI:30616"/>
        <dbReference type="ChEBI" id="CHEBI:33019"/>
        <dbReference type="ChEBI" id="CHEBI:57287"/>
        <dbReference type="ChEBI" id="CHEBI:58562"/>
        <dbReference type="ChEBI" id="CHEBI:73862"/>
        <dbReference type="ChEBI" id="CHEBI:456215"/>
    </reaction>
    <physiologicalReaction direction="left-to-right" evidence="3">
        <dbReference type="Rhea" id="RHEA:67849"/>
    </physiologicalReaction>
</comment>
<comment type="catalytic activity">
    <reaction evidence="3">
        <text>a fatty acid + ATP + CoA = a fatty acyl-CoA + AMP + diphosphate</text>
        <dbReference type="Rhea" id="RHEA:38883"/>
        <dbReference type="ChEBI" id="CHEBI:28868"/>
        <dbReference type="ChEBI" id="CHEBI:30616"/>
        <dbReference type="ChEBI" id="CHEBI:33019"/>
        <dbReference type="ChEBI" id="CHEBI:57287"/>
        <dbReference type="ChEBI" id="CHEBI:77636"/>
        <dbReference type="ChEBI" id="CHEBI:456215"/>
    </reaction>
    <physiologicalReaction direction="left-to-right" evidence="3">
        <dbReference type="Rhea" id="RHEA:38884"/>
    </physiologicalReaction>
</comment>
<comment type="cofactor">
    <cofactor evidence="1">
        <name>Mg(2+)</name>
        <dbReference type="ChEBI" id="CHEBI:18420"/>
    </cofactor>
</comment>
<comment type="subcellular location">
    <subcellularLocation>
        <location evidence="1">Mitochondrion outer membrane</location>
        <topology evidence="1">Single-pass type III membrane protein</topology>
    </subcellularLocation>
    <subcellularLocation>
        <location evidence="1">Peroxisome membrane</location>
        <topology evidence="1">Single-pass type III membrane protein</topology>
    </subcellularLocation>
    <subcellularLocation>
        <location evidence="1">Microsome membrane</location>
        <topology evidence="1">Single-pass type III membrane protein</topology>
    </subcellularLocation>
    <subcellularLocation>
        <location evidence="1">Endoplasmic reticulum membrane</location>
        <topology evidence="1">Single-pass type III membrane protein</topology>
    </subcellularLocation>
</comment>
<comment type="induction">
    <text evidence="5">High expression in ob/ob mice (obese) and mice fed at high sucrose diet.</text>
</comment>
<comment type="similarity">
    <text evidence="6">Belongs to the ATP-dependent AMP-binding enzyme family.</text>
</comment>
<gene>
    <name evidence="7" type="primary">Acsl3</name>
    <name type="synonym">Acs3</name>
    <name type="synonym">Facl3</name>
</gene>
<sequence length="720" mass="80492">MNNHVSSTPSTMKLKQTINPILLYFIHFIISLYTILTYIPFYFLCESKQEKPNQIKAKPVSSKPDSAYRSINSVDGLASVLYPGCDTLDKVFMYAKNKFKNKRLLGTREILNEEDEIQPNGKIFKKVILGHYNWLSYEDVFIRALDFGNGLQMLGQKPKANIAIFCETRAEWMIAAQACFMYNFQLVTLYATLGGPAIVHGLNETEVTNIITSKELLQTKLKDIVSLVPRLRHIITVDGKPPTWSEFPKGVIVHTMAAVQALGVKANVEKKAHSKPLPSDIAVIMYTSGSTGIPKGVMISHSNIIASITGMARRIPRLGEEDVYIGYLPLAHVLELSAELVCLSHGCRIGYSSPQTLADQSSKIKKGSKGDTSVLKPTLMAAVPEIMDRIYKNVMNKVNEMSAFQRNLFILAYNYKMEQISKGCSTPLCDRFVFRNVRRLLGGNIRLLLCGGAPLSATTQRFMNICFCCPVGQGYGLTESTGAGTITEVWDYNTGRVGAPLVCCEIKLKNWEEGGYFNTDKPHPRGEILIGGQNVTMGYYKNEAKTKTDFFEDENGQRWLCTGDIGEFDPDGCLKIIDRKKDLVKLQAGEYVSLGKVEAALKNLPLIDNICAYANSYHSYVIGFVVPNQKELTELARTKGFKGTWEELCNSSEMENEVLKVLSEAAISASLEKFEIPLKIRLSPDPWTPETGLVTDAFKLKRKELKTHYQADIERMYGRK</sequence>
<feature type="chain" id="PRO_0000193108" description="Fatty acid CoA ligase Acsl3">
    <location>
        <begin position="1"/>
        <end position="720"/>
    </location>
</feature>
<feature type="transmembrane region" description="Helical; Signal-anchor for type III membrane protein" evidence="4">
    <location>
        <begin position="21"/>
        <end position="41"/>
    </location>
</feature>
<feature type="topological domain" description="Cytoplasmic" evidence="4">
    <location>
        <begin position="42"/>
        <end position="720"/>
    </location>
</feature>
<feature type="modified residue" description="Phosphoserine" evidence="2">
    <location>
        <position position="683"/>
    </location>
</feature>
<feature type="sequence conflict" description="In Ref. 1; BAB28022." evidence="6" ref="1">
    <original>D</original>
    <variation>E</variation>
    <location>
        <position position="223"/>
    </location>
</feature>
<proteinExistence type="evidence at protein level"/>
<organism>
    <name type="scientific">Mus musculus</name>
    <name type="common">Mouse</name>
    <dbReference type="NCBI Taxonomy" id="10090"/>
    <lineage>
        <taxon>Eukaryota</taxon>
        <taxon>Metazoa</taxon>
        <taxon>Chordata</taxon>
        <taxon>Craniata</taxon>
        <taxon>Vertebrata</taxon>
        <taxon>Euteleostomi</taxon>
        <taxon>Mammalia</taxon>
        <taxon>Eutheria</taxon>
        <taxon>Euarchontoglires</taxon>
        <taxon>Glires</taxon>
        <taxon>Rodentia</taxon>
        <taxon>Myomorpha</taxon>
        <taxon>Muroidea</taxon>
        <taxon>Muridae</taxon>
        <taxon>Murinae</taxon>
        <taxon>Mus</taxon>
        <taxon>Mus</taxon>
    </lineage>
</organism>
<evidence type="ECO:0000250" key="1"/>
<evidence type="ECO:0000250" key="2">
    <source>
        <dbReference type="UniProtKB" id="O95573"/>
    </source>
</evidence>
<evidence type="ECO:0000250" key="3">
    <source>
        <dbReference type="UniProtKB" id="Q63151"/>
    </source>
</evidence>
<evidence type="ECO:0000255" key="4"/>
<evidence type="ECO:0000269" key="5">
    <source>
    </source>
</evidence>
<evidence type="ECO:0000305" key="6"/>
<evidence type="ECO:0000312" key="7">
    <source>
        <dbReference type="MGI" id="MGI:1921455"/>
    </source>
</evidence>
<name>ACSL3_MOUSE</name>
<keyword id="KW-0067">ATP-binding</keyword>
<keyword id="KW-0256">Endoplasmic reticulum</keyword>
<keyword id="KW-0276">Fatty acid metabolism</keyword>
<keyword id="KW-0436">Ligase</keyword>
<keyword id="KW-0443">Lipid metabolism</keyword>
<keyword id="KW-0460">Magnesium</keyword>
<keyword id="KW-0472">Membrane</keyword>
<keyword id="KW-0492">Microsome</keyword>
<keyword id="KW-0496">Mitochondrion</keyword>
<keyword id="KW-1000">Mitochondrion outer membrane</keyword>
<keyword id="KW-0547">Nucleotide-binding</keyword>
<keyword id="KW-0576">Peroxisome</keyword>
<keyword id="KW-0597">Phosphoprotein</keyword>
<keyword id="KW-1185">Reference proteome</keyword>
<keyword id="KW-0735">Signal-anchor</keyword>
<keyword id="KW-0812">Transmembrane</keyword>
<keyword id="KW-1133">Transmembrane helix</keyword>
<accession>Q9CZW4</accession>
<accession>Q8K1J7</accession>
<reference key="1">
    <citation type="journal article" date="2005" name="Science">
        <title>The transcriptional landscape of the mammalian genome.</title>
        <authorList>
            <person name="Carninci P."/>
            <person name="Kasukawa T."/>
            <person name="Katayama S."/>
            <person name="Gough J."/>
            <person name="Frith M.C."/>
            <person name="Maeda N."/>
            <person name="Oyama R."/>
            <person name="Ravasi T."/>
            <person name="Lenhard B."/>
            <person name="Wells C."/>
            <person name="Kodzius R."/>
            <person name="Shimokawa K."/>
            <person name="Bajic V.B."/>
            <person name="Brenner S.E."/>
            <person name="Batalov S."/>
            <person name="Forrest A.R."/>
            <person name="Zavolan M."/>
            <person name="Davis M.J."/>
            <person name="Wilming L.G."/>
            <person name="Aidinis V."/>
            <person name="Allen J.E."/>
            <person name="Ambesi-Impiombato A."/>
            <person name="Apweiler R."/>
            <person name="Aturaliya R.N."/>
            <person name="Bailey T.L."/>
            <person name="Bansal M."/>
            <person name="Baxter L."/>
            <person name="Beisel K.W."/>
            <person name="Bersano T."/>
            <person name="Bono H."/>
            <person name="Chalk A.M."/>
            <person name="Chiu K.P."/>
            <person name="Choudhary V."/>
            <person name="Christoffels A."/>
            <person name="Clutterbuck D.R."/>
            <person name="Crowe M.L."/>
            <person name="Dalla E."/>
            <person name="Dalrymple B.P."/>
            <person name="de Bono B."/>
            <person name="Della Gatta G."/>
            <person name="di Bernardo D."/>
            <person name="Down T."/>
            <person name="Engstrom P."/>
            <person name="Fagiolini M."/>
            <person name="Faulkner G."/>
            <person name="Fletcher C.F."/>
            <person name="Fukushima T."/>
            <person name="Furuno M."/>
            <person name="Futaki S."/>
            <person name="Gariboldi M."/>
            <person name="Georgii-Hemming P."/>
            <person name="Gingeras T.R."/>
            <person name="Gojobori T."/>
            <person name="Green R.E."/>
            <person name="Gustincich S."/>
            <person name="Harbers M."/>
            <person name="Hayashi Y."/>
            <person name="Hensch T.K."/>
            <person name="Hirokawa N."/>
            <person name="Hill D."/>
            <person name="Huminiecki L."/>
            <person name="Iacono M."/>
            <person name="Ikeo K."/>
            <person name="Iwama A."/>
            <person name="Ishikawa T."/>
            <person name="Jakt M."/>
            <person name="Kanapin A."/>
            <person name="Katoh M."/>
            <person name="Kawasawa Y."/>
            <person name="Kelso J."/>
            <person name="Kitamura H."/>
            <person name="Kitano H."/>
            <person name="Kollias G."/>
            <person name="Krishnan S.P."/>
            <person name="Kruger A."/>
            <person name="Kummerfeld S.K."/>
            <person name="Kurochkin I.V."/>
            <person name="Lareau L.F."/>
            <person name="Lazarevic D."/>
            <person name="Lipovich L."/>
            <person name="Liu J."/>
            <person name="Liuni S."/>
            <person name="McWilliam S."/>
            <person name="Madan Babu M."/>
            <person name="Madera M."/>
            <person name="Marchionni L."/>
            <person name="Matsuda H."/>
            <person name="Matsuzawa S."/>
            <person name="Miki H."/>
            <person name="Mignone F."/>
            <person name="Miyake S."/>
            <person name="Morris K."/>
            <person name="Mottagui-Tabar S."/>
            <person name="Mulder N."/>
            <person name="Nakano N."/>
            <person name="Nakauchi H."/>
            <person name="Ng P."/>
            <person name="Nilsson R."/>
            <person name="Nishiguchi S."/>
            <person name="Nishikawa S."/>
            <person name="Nori F."/>
            <person name="Ohara O."/>
            <person name="Okazaki Y."/>
            <person name="Orlando V."/>
            <person name="Pang K.C."/>
            <person name="Pavan W.J."/>
            <person name="Pavesi G."/>
            <person name="Pesole G."/>
            <person name="Petrovsky N."/>
            <person name="Piazza S."/>
            <person name="Reed J."/>
            <person name="Reid J.F."/>
            <person name="Ring B.Z."/>
            <person name="Ringwald M."/>
            <person name="Rost B."/>
            <person name="Ruan Y."/>
            <person name="Salzberg S.L."/>
            <person name="Sandelin A."/>
            <person name="Schneider C."/>
            <person name="Schoenbach C."/>
            <person name="Sekiguchi K."/>
            <person name="Semple C.A."/>
            <person name="Seno S."/>
            <person name="Sessa L."/>
            <person name="Sheng Y."/>
            <person name="Shibata Y."/>
            <person name="Shimada H."/>
            <person name="Shimada K."/>
            <person name="Silva D."/>
            <person name="Sinclair B."/>
            <person name="Sperling S."/>
            <person name="Stupka E."/>
            <person name="Sugiura K."/>
            <person name="Sultana R."/>
            <person name="Takenaka Y."/>
            <person name="Taki K."/>
            <person name="Tammoja K."/>
            <person name="Tan S.L."/>
            <person name="Tang S."/>
            <person name="Taylor M.S."/>
            <person name="Tegner J."/>
            <person name="Teichmann S.A."/>
            <person name="Ueda H.R."/>
            <person name="van Nimwegen E."/>
            <person name="Verardo R."/>
            <person name="Wei C.L."/>
            <person name="Yagi K."/>
            <person name="Yamanishi H."/>
            <person name="Zabarovsky E."/>
            <person name="Zhu S."/>
            <person name="Zimmer A."/>
            <person name="Hide W."/>
            <person name="Bult C."/>
            <person name="Grimmond S.M."/>
            <person name="Teasdale R.D."/>
            <person name="Liu E.T."/>
            <person name="Brusic V."/>
            <person name="Quackenbush J."/>
            <person name="Wahlestedt C."/>
            <person name="Mattick J.S."/>
            <person name="Hume D.A."/>
            <person name="Kai C."/>
            <person name="Sasaki D."/>
            <person name="Tomaru Y."/>
            <person name="Fukuda S."/>
            <person name="Kanamori-Katayama M."/>
            <person name="Suzuki M."/>
            <person name="Aoki J."/>
            <person name="Arakawa T."/>
            <person name="Iida J."/>
            <person name="Imamura K."/>
            <person name="Itoh M."/>
            <person name="Kato T."/>
            <person name="Kawaji H."/>
            <person name="Kawagashira N."/>
            <person name="Kawashima T."/>
            <person name="Kojima M."/>
            <person name="Kondo S."/>
            <person name="Konno H."/>
            <person name="Nakano K."/>
            <person name="Ninomiya N."/>
            <person name="Nishio T."/>
            <person name="Okada M."/>
            <person name="Plessy C."/>
            <person name="Shibata K."/>
            <person name="Shiraki T."/>
            <person name="Suzuki S."/>
            <person name="Tagami M."/>
            <person name="Waki K."/>
            <person name="Watahiki A."/>
            <person name="Okamura-Oho Y."/>
            <person name="Suzuki H."/>
            <person name="Kawai J."/>
            <person name="Hayashizaki Y."/>
        </authorList>
    </citation>
    <scope>NUCLEOTIDE SEQUENCE [LARGE SCALE MRNA]</scope>
    <source>
        <strain>C57BL/6J</strain>
        <tissue>Embryo</tissue>
    </source>
</reference>
<reference key="2">
    <citation type="submission" date="2005-07" db="EMBL/GenBank/DDBJ databases">
        <authorList>
            <person name="Mural R.J."/>
            <person name="Adams M.D."/>
            <person name="Myers E.W."/>
            <person name="Smith H.O."/>
            <person name="Venter J.C."/>
        </authorList>
    </citation>
    <scope>NUCLEOTIDE SEQUENCE [LARGE SCALE GENOMIC DNA]</scope>
</reference>
<reference key="3">
    <citation type="journal article" date="2004" name="Genome Res.">
        <title>The status, quality, and expansion of the NIH full-length cDNA project: the Mammalian Gene Collection (MGC).</title>
        <authorList>
            <consortium name="The MGC Project Team"/>
        </authorList>
    </citation>
    <scope>NUCLEOTIDE SEQUENCE [LARGE SCALE MRNA]</scope>
    <source>
        <strain>Czech II</strain>
        <tissue>Mammary tumor</tissue>
    </source>
</reference>
<reference key="4">
    <citation type="journal article" date="2006" name="Mol. Cell. Proteomics">
        <title>Comprehensive identification of phosphorylation sites in postsynaptic density preparations.</title>
        <authorList>
            <person name="Trinidad J.C."/>
            <person name="Specht C.G."/>
            <person name="Thalhammer A."/>
            <person name="Schoepfer R."/>
            <person name="Burlingame A.L."/>
        </authorList>
    </citation>
    <scope>IDENTIFICATION BY MASS SPECTROMETRY [LARGE SCALE ANALYSIS]</scope>
    <source>
        <tissue>Brain</tissue>
    </source>
</reference>
<reference key="5">
    <citation type="journal article" date="2009" name="J. Biol. Chem.">
        <title>Suppression of long chain acyl-CoA synthetase 3 (ACSL3) decreases hepatic de novo fatty acid synthesis through decreased transcriptional activity.</title>
        <authorList>
            <person name="Bu S.Y."/>
            <person name="Mashek M.T."/>
            <person name="Mashek D.G."/>
        </authorList>
    </citation>
    <scope>INDUCTION</scope>
</reference>
<reference key="6">
    <citation type="journal article" date="2010" name="Cell">
        <title>A tissue-specific atlas of mouse protein phosphorylation and expression.</title>
        <authorList>
            <person name="Huttlin E.L."/>
            <person name="Jedrychowski M.P."/>
            <person name="Elias J.E."/>
            <person name="Goswami T."/>
            <person name="Rad R."/>
            <person name="Beausoleil S.A."/>
            <person name="Villen J."/>
            <person name="Haas W."/>
            <person name="Sowa M.E."/>
            <person name="Gygi S.P."/>
        </authorList>
    </citation>
    <scope>IDENTIFICATION BY MASS SPECTROMETRY [LARGE SCALE ANALYSIS]</scope>
    <source>
        <tissue>Brain</tissue>
        <tissue>Brown adipose tissue</tissue>
        <tissue>Kidney</tissue>
        <tissue>Liver</tissue>
        <tissue>Lung</tissue>
        <tissue>Spleen</tissue>
        <tissue>Testis</tissue>
    </source>
</reference>
<protein>
    <recommendedName>
        <fullName evidence="6">Fatty acid CoA ligase Acsl3</fullName>
    </recommendedName>
    <alternativeName>
        <fullName evidence="3">Arachidonate--CoA ligase</fullName>
        <ecNumber evidence="3">6.2.1.15</ecNumber>
    </alternativeName>
    <alternativeName>
        <fullName>Long-chain acyl-CoA synthetase 3</fullName>
        <shortName>LACS 3</shortName>
    </alternativeName>
    <alternativeName>
        <fullName evidence="6">Long-chain-fatty-acid--CoA ligase 3</fullName>
        <ecNumber evidence="2">6.2.1.3</ecNumber>
    </alternativeName>
    <alternativeName>
        <fullName evidence="3">Medium-chain acyl-CoA ligase Acsl3</fullName>
        <ecNumber evidence="3">6.2.1.2</ecNumber>
    </alternativeName>
</protein>